<comment type="function">
    <text evidence="1">Bifunctional enzyme that catalyzes the GTP-dependent successive addition of multiple gamma-linked L-glutamates to the L-lactyl phosphodiester of 7,8-didemethyl-8-hydroxy-5-deazariboflavin (F420-0) to form polyglutamated F420 derivatives, and the FMNH2-dependent reduction of dehydro-F420-0 to form F420-0.</text>
</comment>
<comment type="catalytic activity">
    <reaction evidence="1">
        <text>oxidized coenzyme F420-0 + GTP + L-glutamate = oxidized coenzyme F420-1 + GDP + phosphate + H(+)</text>
        <dbReference type="Rhea" id="RHEA:30555"/>
        <dbReference type="ChEBI" id="CHEBI:15378"/>
        <dbReference type="ChEBI" id="CHEBI:29985"/>
        <dbReference type="ChEBI" id="CHEBI:37565"/>
        <dbReference type="ChEBI" id="CHEBI:43474"/>
        <dbReference type="ChEBI" id="CHEBI:58189"/>
        <dbReference type="ChEBI" id="CHEBI:59907"/>
        <dbReference type="ChEBI" id="CHEBI:59920"/>
        <dbReference type="EC" id="6.3.2.31"/>
    </reaction>
</comment>
<comment type="catalytic activity">
    <reaction evidence="1">
        <text>oxidized coenzyme F420-1 + GTP + L-glutamate = oxidized coenzyme F420-2 + GDP + phosphate + H(+)</text>
        <dbReference type="Rhea" id="RHEA:30523"/>
        <dbReference type="ChEBI" id="CHEBI:15378"/>
        <dbReference type="ChEBI" id="CHEBI:29985"/>
        <dbReference type="ChEBI" id="CHEBI:37565"/>
        <dbReference type="ChEBI" id="CHEBI:43474"/>
        <dbReference type="ChEBI" id="CHEBI:57922"/>
        <dbReference type="ChEBI" id="CHEBI:58189"/>
        <dbReference type="ChEBI" id="CHEBI:59920"/>
        <dbReference type="EC" id="6.3.2.34"/>
    </reaction>
</comment>
<comment type="catalytic activity">
    <reaction evidence="1">
        <text>oxidized coenzyme F420-(gamma-L-Glu)(n) + GTP + L-glutamate = oxidized coenzyme F420-(gamma-L-Glu)(n+1) + GDP + phosphate + H(+)</text>
        <dbReference type="Rhea" id="RHEA:51236"/>
        <dbReference type="Rhea" id="RHEA-COMP:12939"/>
        <dbReference type="Rhea" id="RHEA-COMP:12940"/>
        <dbReference type="ChEBI" id="CHEBI:15378"/>
        <dbReference type="ChEBI" id="CHEBI:29985"/>
        <dbReference type="ChEBI" id="CHEBI:37565"/>
        <dbReference type="ChEBI" id="CHEBI:43474"/>
        <dbReference type="ChEBI" id="CHEBI:58189"/>
        <dbReference type="ChEBI" id="CHEBI:133980"/>
    </reaction>
</comment>
<comment type="catalytic activity">
    <reaction evidence="1">
        <text>oxidized coenzyme F420-0 + FMN + H(+) = dehydro coenzyme F420-0 + FMNH2</text>
        <dbReference type="Rhea" id="RHEA:60360"/>
        <dbReference type="ChEBI" id="CHEBI:15378"/>
        <dbReference type="ChEBI" id="CHEBI:57618"/>
        <dbReference type="ChEBI" id="CHEBI:58210"/>
        <dbReference type="ChEBI" id="CHEBI:59907"/>
        <dbReference type="ChEBI" id="CHEBI:143705"/>
        <dbReference type="EC" id="1.3.8.17"/>
    </reaction>
</comment>
<comment type="cofactor">
    <cofactor evidence="1">
        <name>Mg(2+)</name>
        <dbReference type="ChEBI" id="CHEBI:18420"/>
    </cofactor>
    <cofactor evidence="1">
        <name>Mn(2+)</name>
        <dbReference type="ChEBI" id="CHEBI:29035"/>
    </cofactor>
    <text evidence="1">Binds 2 divalent metal cations per subunit. The ions could be magnesium and/or manganese.</text>
</comment>
<comment type="cofactor">
    <cofactor evidence="1">
        <name>K(+)</name>
        <dbReference type="ChEBI" id="CHEBI:29103"/>
    </cofactor>
    <text evidence="1">Monovalent cation. The ion could be potassium.</text>
</comment>
<comment type="pathway">
    <text evidence="1">Cofactor biosynthesis; coenzyme F420 biosynthesis.</text>
</comment>
<comment type="similarity">
    <text evidence="1">In the N-terminal section; belongs to the CofE family.</text>
</comment>
<name>FBIB_MYCLE</name>
<dbReference type="EC" id="6.3.2.31" evidence="1"/>
<dbReference type="EC" id="6.3.2.34" evidence="1"/>
<dbReference type="EC" id="1.3.8.17" evidence="1"/>
<dbReference type="EMBL" id="AL583919">
    <property type="protein sequence ID" value="CAC30267.1"/>
    <property type="molecule type" value="Genomic_DNA"/>
</dbReference>
<dbReference type="PIR" id="G87003">
    <property type="entry name" value="G87003"/>
</dbReference>
<dbReference type="RefSeq" id="NP_301587.1">
    <property type="nucleotide sequence ID" value="NC_002677.1"/>
</dbReference>
<dbReference type="RefSeq" id="WP_010907911.1">
    <property type="nucleotide sequence ID" value="NC_002677.1"/>
</dbReference>
<dbReference type="SMR" id="Q9CCK2"/>
<dbReference type="STRING" id="272631.gene:17574582"/>
<dbReference type="KEGG" id="mle:ML0758"/>
<dbReference type="PATRIC" id="fig|272631.5.peg.1369"/>
<dbReference type="Leproma" id="ML0758"/>
<dbReference type="eggNOG" id="COG0778">
    <property type="taxonomic scope" value="Bacteria"/>
</dbReference>
<dbReference type="eggNOG" id="COG1478">
    <property type="taxonomic scope" value="Bacteria"/>
</dbReference>
<dbReference type="HOGENOM" id="CLU_051152_0_0_11"/>
<dbReference type="OrthoDB" id="9788295at2"/>
<dbReference type="UniPathway" id="UPA00071"/>
<dbReference type="Proteomes" id="UP000000806">
    <property type="component" value="Chromosome"/>
</dbReference>
<dbReference type="GO" id="GO:0052618">
    <property type="term" value="F:coenzyme F420-0:L-glutamate ligase activity"/>
    <property type="evidence" value="ECO:0007669"/>
    <property type="project" value="UniProtKB-UniRule"/>
</dbReference>
<dbReference type="GO" id="GO:0052619">
    <property type="term" value="F:coenzyme F420-1:gamma-L-glutamate ligase activity"/>
    <property type="evidence" value="ECO:0007669"/>
    <property type="project" value="UniProtKB-UniRule"/>
</dbReference>
<dbReference type="GO" id="GO:0005525">
    <property type="term" value="F:GTP binding"/>
    <property type="evidence" value="ECO:0007669"/>
    <property type="project" value="UniProtKB-KW"/>
</dbReference>
<dbReference type="GO" id="GO:0046872">
    <property type="term" value="F:metal ion binding"/>
    <property type="evidence" value="ECO:0007669"/>
    <property type="project" value="UniProtKB-KW"/>
</dbReference>
<dbReference type="GO" id="GO:0052890">
    <property type="term" value="F:oxidoreductase activity, acting on the CH-CH group of donors, with a flavin as acceptor"/>
    <property type="evidence" value="ECO:0007669"/>
    <property type="project" value="UniProtKB-UniRule"/>
</dbReference>
<dbReference type="GO" id="GO:0052645">
    <property type="term" value="P:F420-0 metabolic process"/>
    <property type="evidence" value="ECO:0007669"/>
    <property type="project" value="UniProtKB-UniRule"/>
</dbReference>
<dbReference type="CDD" id="cd20607">
    <property type="entry name" value="FbiB_C-like"/>
    <property type="match status" value="1"/>
</dbReference>
<dbReference type="FunFam" id="3.40.109.10:FF:000009">
    <property type="entry name" value="Coenzyme F420:L-glutamate ligase"/>
    <property type="match status" value="1"/>
</dbReference>
<dbReference type="Gene3D" id="3.30.1330.100">
    <property type="entry name" value="CofE-like"/>
    <property type="match status" value="1"/>
</dbReference>
<dbReference type="Gene3D" id="3.90.1660.10">
    <property type="entry name" value="CofE-like domain"/>
    <property type="match status" value="1"/>
</dbReference>
<dbReference type="Gene3D" id="3.40.109.10">
    <property type="entry name" value="NADH Oxidase"/>
    <property type="match status" value="1"/>
</dbReference>
<dbReference type="HAMAP" id="MF_01259">
    <property type="entry name" value="F420_ligase_FbiB"/>
    <property type="match status" value="1"/>
</dbReference>
<dbReference type="InterPro" id="IPR008225">
    <property type="entry name" value="F420-0_g-glutamyl_ligase"/>
</dbReference>
<dbReference type="InterPro" id="IPR002847">
    <property type="entry name" value="F420-0_gamma-glut_ligase-dom"/>
</dbReference>
<dbReference type="InterPro" id="IPR019943">
    <property type="entry name" value="F420_FbiB_C"/>
</dbReference>
<dbReference type="InterPro" id="IPR023661">
    <property type="entry name" value="FbiB"/>
</dbReference>
<dbReference type="InterPro" id="IPR029479">
    <property type="entry name" value="Nitroreductase"/>
</dbReference>
<dbReference type="InterPro" id="IPR000415">
    <property type="entry name" value="Nitroreductase-like"/>
</dbReference>
<dbReference type="NCBIfam" id="TIGR01916">
    <property type="entry name" value="F420_cofE"/>
    <property type="match status" value="1"/>
</dbReference>
<dbReference type="NCBIfam" id="TIGR03553">
    <property type="entry name" value="F420_FbiB_CTERM"/>
    <property type="match status" value="1"/>
</dbReference>
<dbReference type="NCBIfam" id="NF009810">
    <property type="entry name" value="PRK13294.1"/>
    <property type="match status" value="1"/>
</dbReference>
<dbReference type="PANTHER" id="PTHR47917">
    <property type="match status" value="1"/>
</dbReference>
<dbReference type="PANTHER" id="PTHR47917:SF1">
    <property type="entry name" value="COENZYME F420:L-GLUTAMATE LIGASE"/>
    <property type="match status" value="1"/>
</dbReference>
<dbReference type="Pfam" id="PF01996">
    <property type="entry name" value="F420_ligase"/>
    <property type="match status" value="1"/>
</dbReference>
<dbReference type="Pfam" id="PF00881">
    <property type="entry name" value="Nitroreductase"/>
    <property type="match status" value="1"/>
</dbReference>
<dbReference type="SUPFAM" id="SSF144010">
    <property type="entry name" value="CofE-like"/>
    <property type="match status" value="1"/>
</dbReference>
<dbReference type="SUPFAM" id="SSF55469">
    <property type="entry name" value="FMN-dependent nitroreductase-like"/>
    <property type="match status" value="1"/>
</dbReference>
<feature type="chain" id="PRO_0000145778" description="Bifunctional F420 biosynthesis protein FbiB">
    <location>
        <begin position="1"/>
        <end position="457"/>
    </location>
</feature>
<feature type="region of interest" description="Coenzyme F420:L-glutamate ligase" evidence="1">
    <location>
        <begin position="1"/>
        <end position="253"/>
    </location>
</feature>
<feature type="region of interest" description="Dehydro-coenzyme F420-0 reductase" evidence="1">
    <location>
        <begin position="254"/>
        <end position="457"/>
    </location>
</feature>
<feature type="binding site" evidence="1">
    <location>
        <begin position="29"/>
        <end position="32"/>
    </location>
    <ligand>
        <name>GTP</name>
        <dbReference type="ChEBI" id="CHEBI:37565"/>
    </ligand>
</feature>
<feature type="binding site" evidence="1">
    <location>
        <position position="59"/>
    </location>
    <ligand>
        <name>GTP</name>
        <dbReference type="ChEBI" id="CHEBI:37565"/>
    </ligand>
</feature>
<feature type="binding site" evidence="1">
    <location>
        <position position="64"/>
    </location>
    <ligand>
        <name>GTP</name>
        <dbReference type="ChEBI" id="CHEBI:37565"/>
    </ligand>
</feature>
<feature type="binding site" evidence="1">
    <location>
        <position position="118"/>
    </location>
    <ligand>
        <name>a divalent metal cation</name>
        <dbReference type="ChEBI" id="CHEBI:60240"/>
        <label>1</label>
    </ligand>
</feature>
<feature type="binding site" evidence="1">
    <location>
        <position position="121"/>
    </location>
    <ligand>
        <name>GTP</name>
        <dbReference type="ChEBI" id="CHEBI:37565"/>
    </ligand>
</feature>
<feature type="binding site" evidence="1">
    <location>
        <position position="159"/>
    </location>
    <ligand>
        <name>a divalent metal cation</name>
        <dbReference type="ChEBI" id="CHEBI:60240"/>
        <label>1</label>
    </ligand>
</feature>
<feature type="binding site" evidence="1">
    <location>
        <position position="160"/>
    </location>
    <ligand>
        <name>a divalent metal cation</name>
        <dbReference type="ChEBI" id="CHEBI:60240"/>
        <label>2</label>
    </ligand>
</feature>
<feature type="binding site" evidence="1">
    <location>
        <begin position="269"/>
        <end position="273"/>
    </location>
    <ligand>
        <name>FMN</name>
        <dbReference type="ChEBI" id="CHEBI:58210"/>
    </ligand>
</feature>
<feature type="binding site" evidence="1">
    <location>
        <position position="297"/>
    </location>
    <ligand>
        <name>FMN</name>
        <dbReference type="ChEBI" id="CHEBI:58210"/>
    </ligand>
</feature>
<feature type="binding site" evidence="1">
    <location>
        <position position="329"/>
    </location>
    <ligand>
        <name>coenzyme F420-(gamma-Glu)n</name>
        <dbReference type="ChEBI" id="CHEBI:133980"/>
    </ligand>
</feature>
<feature type="binding site" evidence="1">
    <location>
        <position position="408"/>
    </location>
    <ligand>
        <name>FMN</name>
        <dbReference type="ChEBI" id="CHEBI:58210"/>
    </ligand>
</feature>
<feature type="binding site" evidence="1">
    <location>
        <position position="445"/>
    </location>
    <ligand>
        <name>FMN</name>
        <dbReference type="ChEBI" id="CHEBI:58210"/>
    </ligand>
</feature>
<reference key="1">
    <citation type="journal article" date="2001" name="Nature">
        <title>Massive gene decay in the leprosy bacillus.</title>
        <authorList>
            <person name="Cole S.T."/>
            <person name="Eiglmeier K."/>
            <person name="Parkhill J."/>
            <person name="James K.D."/>
            <person name="Thomson N.R."/>
            <person name="Wheeler P.R."/>
            <person name="Honore N."/>
            <person name="Garnier T."/>
            <person name="Churcher C.M."/>
            <person name="Harris D.E."/>
            <person name="Mungall K.L."/>
            <person name="Basham D."/>
            <person name="Brown D."/>
            <person name="Chillingworth T."/>
            <person name="Connor R."/>
            <person name="Davies R.M."/>
            <person name="Devlin K."/>
            <person name="Duthoy S."/>
            <person name="Feltwell T."/>
            <person name="Fraser A."/>
            <person name="Hamlin N."/>
            <person name="Holroyd S."/>
            <person name="Hornsby T."/>
            <person name="Jagels K."/>
            <person name="Lacroix C."/>
            <person name="Maclean J."/>
            <person name="Moule S."/>
            <person name="Murphy L.D."/>
            <person name="Oliver K."/>
            <person name="Quail M.A."/>
            <person name="Rajandream M.A."/>
            <person name="Rutherford K.M."/>
            <person name="Rutter S."/>
            <person name="Seeger K."/>
            <person name="Simon S."/>
            <person name="Simmonds M."/>
            <person name="Skelton J."/>
            <person name="Squares R."/>
            <person name="Squares S."/>
            <person name="Stevens K."/>
            <person name="Taylor K."/>
            <person name="Whitehead S."/>
            <person name="Woodward J.R."/>
            <person name="Barrell B.G."/>
        </authorList>
    </citation>
    <scope>NUCLEOTIDE SEQUENCE [LARGE SCALE GENOMIC DNA]</scope>
    <source>
        <strain>TN</strain>
    </source>
</reference>
<sequence length="457" mass="48562">MTSSDSHRSAPSPEHGTASTIEILPVAGLPEFRPGDDLSAALAAAAPWLRDGDVVVVTSKVVSKCEGRLVPAPEDTRGRNELRRKLINDETIRVLARKGRTLIIENGLGLVQAAAGVDGSNVGRGELALLPVNPDASAAVLRIGLRAMLGVNVAVVITDTMGRAWRNGQTDVAIGAAGLAVLHNYSGAVDRYGNELVVTEIAVADEVAAATDLVKGKLTAMPVAVVRGLSPTDDGSTAQHLLRNGPDDLFWLGTTEALELGRQQAQLLRRSVRQFSDEPIAAELIETAVAEALTAPAPHHTRPVRFVWLQTPAVRTRLLDRMADKWRLDLASDALPADAIAQRVARGQILYDAPEVIIPFMVPDGAHAYPDAARASAEHTMFIVAVGAAVQALLVALAVRGLGSCWIGSTIFADDLVRAELELPADWEPLGAIAIGYAHEPTDLREPVRVADLLLRK</sequence>
<accession>Q9CCK2</accession>
<keyword id="KW-0342">GTP-binding</keyword>
<keyword id="KW-0436">Ligase</keyword>
<keyword id="KW-0460">Magnesium</keyword>
<keyword id="KW-0464">Manganese</keyword>
<keyword id="KW-0479">Metal-binding</keyword>
<keyword id="KW-0511">Multifunctional enzyme</keyword>
<keyword id="KW-0547">Nucleotide-binding</keyword>
<keyword id="KW-0560">Oxidoreductase</keyword>
<keyword id="KW-0630">Potassium</keyword>
<keyword id="KW-1185">Reference proteome</keyword>
<gene>
    <name evidence="1" type="primary">fbiB</name>
    <name type="ordered locus">ML0758</name>
</gene>
<proteinExistence type="inferred from homology"/>
<organism>
    <name type="scientific">Mycobacterium leprae (strain TN)</name>
    <dbReference type="NCBI Taxonomy" id="272631"/>
    <lineage>
        <taxon>Bacteria</taxon>
        <taxon>Bacillati</taxon>
        <taxon>Actinomycetota</taxon>
        <taxon>Actinomycetes</taxon>
        <taxon>Mycobacteriales</taxon>
        <taxon>Mycobacteriaceae</taxon>
        <taxon>Mycobacterium</taxon>
    </lineage>
</organism>
<protein>
    <recommendedName>
        <fullName evidence="1">Bifunctional F420 biosynthesis protein FbiB</fullName>
    </recommendedName>
    <domain>
        <recommendedName>
            <fullName evidence="1">Coenzyme F420:L-glutamate ligase</fullName>
            <ecNumber evidence="1">6.3.2.31</ecNumber>
            <ecNumber evidence="1">6.3.2.34</ecNumber>
        </recommendedName>
        <alternativeName>
            <fullName evidence="1">Coenzyme F420-0:L-glutamate ligase</fullName>
        </alternativeName>
        <alternativeName>
            <fullName evidence="1">Coenzyme F420-1:gamma-L-glutamate ligase</fullName>
        </alternativeName>
    </domain>
    <domain>
        <recommendedName>
            <fullName evidence="1">Dehydro-coenzyme F420-0 reductase</fullName>
            <ecNumber evidence="1">1.3.8.17</ecNumber>
        </recommendedName>
    </domain>
</protein>
<evidence type="ECO:0000255" key="1">
    <source>
        <dbReference type="HAMAP-Rule" id="MF_01259"/>
    </source>
</evidence>